<organism>
    <name type="scientific">Sarcophaga peregrina</name>
    <name type="common">Flesh fly</name>
    <name type="synonym">Boettcherisca peregrina</name>
    <dbReference type="NCBI Taxonomy" id="7386"/>
    <lineage>
        <taxon>Eukaryota</taxon>
        <taxon>Metazoa</taxon>
        <taxon>Ecdysozoa</taxon>
        <taxon>Arthropoda</taxon>
        <taxon>Hexapoda</taxon>
        <taxon>Insecta</taxon>
        <taxon>Pterygota</taxon>
        <taxon>Neoptera</taxon>
        <taxon>Endopterygota</taxon>
        <taxon>Diptera</taxon>
        <taxon>Brachycera</taxon>
        <taxon>Muscomorpha</taxon>
        <taxon>Oestroidea</taxon>
        <taxon>Sarcophagidae</taxon>
        <taxon>Sarcophaga</taxon>
        <taxon>Boettcherisca</taxon>
    </lineage>
</organism>
<keyword id="KW-0044">Antibiotic</keyword>
<keyword id="KW-0929">Antimicrobial</keyword>
<keyword id="KW-0903">Direct protein sequencing</keyword>
<keyword id="KW-0391">Immunity</keyword>
<keyword id="KW-0399">Innate immunity</keyword>
<keyword id="KW-0964">Secreted</keyword>
<feature type="peptide" id="PRO_0000044686" description="Sarcotoxin-1D">
    <location>
        <begin position="1"/>
        <end position="40"/>
    </location>
</feature>
<reference key="1">
    <citation type="journal article" date="1988" name="J. Biol. Chem.">
        <title>Purification of three antibacterial proteins from the culture medium of NIH-Sape-4, an embryonic cell line of Sarcophaga peregrina.</title>
        <authorList>
            <person name="Matsuyama K."/>
            <person name="Natori S."/>
        </authorList>
    </citation>
    <scope>PROTEIN SEQUENCE</scope>
</reference>
<name>SRX1D_SARPE</name>
<accession>P18312</accession>
<proteinExistence type="evidence at protein level"/>
<evidence type="ECO:0000305" key="1"/>
<sequence>GWIRDFGKRIERVGQHTRDATIQTIAVAQQAANVAATLKG</sequence>
<dbReference type="PIR" id="B31791">
    <property type="entry name" value="B31791"/>
</dbReference>
<dbReference type="SMR" id="P18312"/>
<dbReference type="GO" id="GO:0005615">
    <property type="term" value="C:extracellular space"/>
    <property type="evidence" value="ECO:0007669"/>
    <property type="project" value="TreeGrafter"/>
</dbReference>
<dbReference type="GO" id="GO:0019731">
    <property type="term" value="P:antibacterial humoral response"/>
    <property type="evidence" value="ECO:0007669"/>
    <property type="project" value="InterPro"/>
</dbReference>
<dbReference type="GO" id="GO:0050829">
    <property type="term" value="P:defense response to Gram-negative bacterium"/>
    <property type="evidence" value="ECO:0007669"/>
    <property type="project" value="UniProtKB-ARBA"/>
</dbReference>
<dbReference type="GO" id="GO:0050830">
    <property type="term" value="P:defense response to Gram-positive bacterium"/>
    <property type="evidence" value="ECO:0007669"/>
    <property type="project" value="TreeGrafter"/>
</dbReference>
<dbReference type="GO" id="GO:0045087">
    <property type="term" value="P:innate immune response"/>
    <property type="evidence" value="ECO:0007669"/>
    <property type="project" value="UniProtKB-KW"/>
</dbReference>
<dbReference type="InterPro" id="IPR000875">
    <property type="entry name" value="Cecropin"/>
</dbReference>
<dbReference type="InterPro" id="IPR020400">
    <property type="entry name" value="Cecropin_insect"/>
</dbReference>
<dbReference type="PANTHER" id="PTHR38329">
    <property type="entry name" value="CECROPIN-A1-RELATED"/>
    <property type="match status" value="1"/>
</dbReference>
<dbReference type="PANTHER" id="PTHR38329:SF1">
    <property type="entry name" value="CECROPIN-A1-RELATED"/>
    <property type="match status" value="1"/>
</dbReference>
<dbReference type="Pfam" id="PF00272">
    <property type="entry name" value="Cecropin"/>
    <property type="match status" value="1"/>
</dbReference>
<dbReference type="PROSITE" id="PS00268">
    <property type="entry name" value="CECROPIN"/>
    <property type="match status" value="1"/>
</dbReference>
<protein>
    <recommendedName>
        <fullName>Sarcotoxin-1D</fullName>
    </recommendedName>
    <alternativeName>
        <fullName>Sarcotoxin ID</fullName>
    </alternativeName>
</protein>
<comment type="function">
    <text>Sarcotoxins, which are potent bactericidal proteins, are produced in response to injury. They are cytotoxic to both Gram-positive and Gram-negative bacteria.</text>
</comment>
<comment type="subcellular location">
    <subcellularLocation>
        <location>Secreted</location>
    </subcellularLocation>
</comment>
<comment type="similarity">
    <text evidence="1">Belongs to the cecropin family.</text>
</comment>